<name>PRE3_STAAC</name>
<accession>Q5HJZ6</accession>
<dbReference type="EMBL" id="CP000045">
    <property type="protein sequence ID" value="AAW36314.1"/>
    <property type="molecule type" value="Genomic_DNA"/>
</dbReference>
<dbReference type="SMR" id="Q5HJZ6"/>
<dbReference type="KEGG" id="sac:SAA0003"/>
<dbReference type="HOGENOM" id="CLU_035698_0_0_9"/>
<dbReference type="Proteomes" id="UP000000530">
    <property type="component" value="Plasmid pT181"/>
</dbReference>
<dbReference type="GO" id="GO:0003677">
    <property type="term" value="F:DNA binding"/>
    <property type="evidence" value="ECO:0007669"/>
    <property type="project" value="UniProtKB-KW"/>
</dbReference>
<dbReference type="GO" id="GO:0006310">
    <property type="term" value="P:DNA recombination"/>
    <property type="evidence" value="ECO:0007669"/>
    <property type="project" value="InterPro"/>
</dbReference>
<dbReference type="CDD" id="cd17242">
    <property type="entry name" value="MobM_relaxase"/>
    <property type="match status" value="1"/>
</dbReference>
<dbReference type="Gene3D" id="3.30.930.30">
    <property type="match status" value="1"/>
</dbReference>
<dbReference type="InterPro" id="IPR001668">
    <property type="entry name" value="Mob_Pre"/>
</dbReference>
<dbReference type="NCBIfam" id="NF041497">
    <property type="entry name" value="MobV"/>
    <property type="match status" value="1"/>
</dbReference>
<dbReference type="Pfam" id="PF01076">
    <property type="entry name" value="Mob_Pre"/>
    <property type="match status" value="1"/>
</dbReference>
<feature type="chain" id="PRO_0000224927" description="Plasmid recombination enzyme type 3">
    <location>
        <begin position="1"/>
        <end position="413"/>
    </location>
</feature>
<feature type="region of interest" description="Disordered" evidence="3">
    <location>
        <begin position="179"/>
        <end position="218"/>
    </location>
</feature>
<feature type="region of interest" description="Disordered" evidence="3">
    <location>
        <begin position="374"/>
        <end position="413"/>
    </location>
</feature>
<feature type="compositionally biased region" description="Basic and acidic residues" evidence="3">
    <location>
        <begin position="188"/>
        <end position="218"/>
    </location>
</feature>
<feature type="compositionally biased region" description="Basic and acidic residues" evidence="3">
    <location>
        <begin position="403"/>
        <end position="413"/>
    </location>
</feature>
<feature type="binding site" evidence="2">
    <location>
        <position position="45"/>
    </location>
    <ligand>
        <name>DNA</name>
        <dbReference type="ChEBI" id="CHEBI:16991"/>
    </ligand>
</feature>
<feature type="binding site" evidence="2">
    <location>
        <position position="115"/>
    </location>
    <ligand>
        <name>DNA</name>
        <dbReference type="ChEBI" id="CHEBI:16991"/>
    </ligand>
</feature>
<sequence length="413" mass="48526">MSYSIVRVSKVKSGTNTTGIQKHVQRENNNYENEDIDHSKTYLNYDLVNANKQNFNNLIDEKIEQNYTGKRKIRTDAIKHIDGLITSDNDFFDNQTPEDTKQFFEYAKEFLEQEYGKDNLLYATVHMDEKTPHMHYGVVPITDDGRLSAKEVVGNKKALTAFQDRFNEHVKQRGYDLERGQSRQVTNAKHEQISQYKQKTEYHKQEYERESQKTDHIKQKNDKLMQEYQKSLNTLKKPINVPYEQETEKVGGLFSKEIQETGNVVISQKDFNEFQKQIKAAQDISEDYEYIKSGRALDDKDKEIREKDDLLNKAVERIENADDNFNQLYENAKPLKENIEIALKLLKILLKELERVLGRNTFAERVNKLTEDEPKLNGLAGNLDKKMNPELYSEQEQQQEQQKNQKRDRGMHL</sequence>
<protein>
    <recommendedName>
        <fullName>Plasmid recombination enzyme type 3</fullName>
    </recommendedName>
    <alternativeName>
        <fullName>Mobilization protein</fullName>
    </alternativeName>
    <alternativeName>
        <fullName>Plasmid recombinase</fullName>
    </alternativeName>
</protein>
<proteinExistence type="inferred from homology"/>
<geneLocation type="plasmid">
    <name>pT181</name>
</geneLocation>
<keyword id="KW-0238">DNA-binding</keyword>
<keyword id="KW-0614">Plasmid</keyword>
<evidence type="ECO:0000250" key="1"/>
<evidence type="ECO:0000255" key="2"/>
<evidence type="ECO:0000256" key="3">
    <source>
        <dbReference type="SAM" id="MobiDB-lite"/>
    </source>
</evidence>
<evidence type="ECO:0000305" key="4"/>
<reference key="1">
    <citation type="journal article" date="2005" name="J. Bacteriol.">
        <title>Insights on evolution of virulence and resistance from the complete genome analysis of an early methicillin-resistant Staphylococcus aureus strain and a biofilm-producing methicillin-resistant Staphylococcus epidermidis strain.</title>
        <authorList>
            <person name="Gill S.R."/>
            <person name="Fouts D.E."/>
            <person name="Archer G.L."/>
            <person name="Mongodin E.F."/>
            <person name="DeBoy R.T."/>
            <person name="Ravel J."/>
            <person name="Paulsen I.T."/>
            <person name="Kolonay J.F."/>
            <person name="Brinkac L.M."/>
            <person name="Beanan M.J."/>
            <person name="Dodson R.J."/>
            <person name="Daugherty S.C."/>
            <person name="Madupu R."/>
            <person name="Angiuoli S.V."/>
            <person name="Durkin A.S."/>
            <person name="Haft D.H."/>
            <person name="Vamathevan J.J."/>
            <person name="Khouri H."/>
            <person name="Utterback T.R."/>
            <person name="Lee C."/>
            <person name="Dimitrov G."/>
            <person name="Jiang L."/>
            <person name="Qin H."/>
            <person name="Weidman J."/>
            <person name="Tran K."/>
            <person name="Kang K.H."/>
            <person name="Hance I.R."/>
            <person name="Nelson K.E."/>
            <person name="Fraser C.M."/>
        </authorList>
    </citation>
    <scope>NUCLEOTIDE SEQUENCE [LARGE SCALE GENOMIC DNA]</scope>
    <source>
        <strain>COL</strain>
    </source>
</reference>
<comment type="function">
    <text evidence="1">The interaction of the RSA site and the PRE protein may not only serves a function in plasmid maintenance, but may also contributes to the distribution of small antibiotic resistance plasmids among Gram-positive bacteria.</text>
</comment>
<comment type="miscellaneous">
    <text evidence="1">Contains conserved positively charged amino acids probably involved in the binding of the pre protein to the RSA site.</text>
</comment>
<comment type="similarity">
    <text evidence="4">Belongs to the plasmid mobilization pre family.</text>
</comment>
<gene>
    <name type="primary">pre</name>
    <name type="ordered locus">SAA0003</name>
</gene>
<organism>
    <name type="scientific">Staphylococcus aureus (strain COL)</name>
    <dbReference type="NCBI Taxonomy" id="93062"/>
    <lineage>
        <taxon>Bacteria</taxon>
        <taxon>Bacillati</taxon>
        <taxon>Bacillota</taxon>
        <taxon>Bacilli</taxon>
        <taxon>Bacillales</taxon>
        <taxon>Staphylococcaceae</taxon>
        <taxon>Staphylococcus</taxon>
    </lineage>
</organism>